<keyword id="KW-0025">Alternative splicing</keyword>
<keyword id="KW-0051">Antiviral defense</keyword>
<keyword id="KW-0963">Cytoplasm</keyword>
<keyword id="KW-1017">Isopeptide bond</keyword>
<keyword id="KW-0506">mRNA capping</keyword>
<keyword id="KW-0507">mRNA processing</keyword>
<keyword id="KW-0509">mRNA transport</keyword>
<keyword id="KW-0539">Nucleus</keyword>
<keyword id="KW-0597">Phosphoprotein</keyword>
<keyword id="KW-1185">Reference proteome</keyword>
<keyword id="KW-0694">RNA-binding</keyword>
<keyword id="KW-0813">Transport</keyword>
<keyword id="KW-0832">Ubl conjugation</keyword>
<feature type="chain" id="PRO_0000308583" description="Nuclear cap-binding protein subunit 3">
    <location>
        <begin position="1"/>
        <end position="615"/>
    </location>
</feature>
<feature type="region of interest" description="Disordered" evidence="2">
    <location>
        <begin position="15"/>
        <end position="43"/>
    </location>
</feature>
<feature type="region of interest" description="RNA recognition motif (RRM) domain" evidence="1">
    <location>
        <begin position="126"/>
        <end position="187"/>
    </location>
</feature>
<feature type="region of interest" description="Disordered" evidence="2">
    <location>
        <begin position="182"/>
        <end position="233"/>
    </location>
</feature>
<feature type="region of interest" description="Disordered" evidence="2">
    <location>
        <begin position="332"/>
        <end position="400"/>
    </location>
</feature>
<feature type="region of interest" description="Disordered" evidence="2">
    <location>
        <begin position="430"/>
        <end position="454"/>
    </location>
</feature>
<feature type="region of interest" description="Disordered" evidence="2">
    <location>
        <begin position="467"/>
        <end position="615"/>
    </location>
</feature>
<feature type="short sequence motif" description="WLDD motif; essential for 7-methylguanosine-containing mRNA cap binding" evidence="1">
    <location>
        <begin position="155"/>
        <end position="158"/>
    </location>
</feature>
<feature type="compositionally biased region" description="Low complexity" evidence="2">
    <location>
        <begin position="15"/>
        <end position="27"/>
    </location>
</feature>
<feature type="compositionally biased region" description="Basic and acidic residues" evidence="2">
    <location>
        <begin position="185"/>
        <end position="208"/>
    </location>
</feature>
<feature type="compositionally biased region" description="Acidic residues" evidence="2">
    <location>
        <begin position="209"/>
        <end position="230"/>
    </location>
</feature>
<feature type="compositionally biased region" description="Acidic residues" evidence="2">
    <location>
        <begin position="341"/>
        <end position="360"/>
    </location>
</feature>
<feature type="compositionally biased region" description="Basic and acidic residues" evidence="2">
    <location>
        <begin position="361"/>
        <end position="383"/>
    </location>
</feature>
<feature type="compositionally biased region" description="Basic and acidic residues" evidence="2">
    <location>
        <begin position="506"/>
        <end position="516"/>
    </location>
</feature>
<feature type="compositionally biased region" description="Basic and acidic residues" evidence="2">
    <location>
        <begin position="549"/>
        <end position="564"/>
    </location>
</feature>
<feature type="compositionally biased region" description="Basic and acidic residues" evidence="2">
    <location>
        <begin position="580"/>
        <end position="593"/>
    </location>
</feature>
<feature type="compositionally biased region" description="Low complexity" evidence="2">
    <location>
        <begin position="606"/>
        <end position="615"/>
    </location>
</feature>
<feature type="modified residue" description="Phosphoserine" evidence="7">
    <location>
        <position position="25"/>
    </location>
</feature>
<feature type="modified residue" description="Phosphoserine" evidence="1">
    <location>
        <position position="73"/>
    </location>
</feature>
<feature type="modified residue" description="Phosphoserine" evidence="1">
    <location>
        <position position="209"/>
    </location>
</feature>
<feature type="modified residue" description="Phosphoserine" evidence="1">
    <location>
        <position position="210"/>
    </location>
</feature>
<feature type="modified residue" description="Phosphothreonine" evidence="1">
    <location>
        <position position="408"/>
    </location>
</feature>
<feature type="modified residue" description="Phosphoserine" evidence="1">
    <location>
        <position position="410"/>
    </location>
</feature>
<feature type="modified residue" description="Phosphoserine" evidence="7">
    <location>
        <position position="563"/>
    </location>
</feature>
<feature type="modified residue" description="Phosphoserine" evidence="1">
    <location>
        <position position="615"/>
    </location>
</feature>
<feature type="cross-link" description="Glycyl lysine isopeptide (Lys-Gly) (interchain with G-Cter in SUMO2)" evidence="1">
    <location>
        <position position="12"/>
    </location>
</feature>
<feature type="cross-link" description="Glycyl lysine isopeptide (Lys-Gly) (interchain with G-Cter in SUMO2)" evidence="1">
    <location>
        <position position="70"/>
    </location>
</feature>
<feature type="cross-link" description="Glycyl lysine isopeptide (Lys-Gly) (interchain with G-Cter in SUMO2)" evidence="1">
    <location>
        <position position="186"/>
    </location>
</feature>
<feature type="cross-link" description="Glycyl lysine isopeptide (Lys-Gly) (interchain with G-Cter in SUMO2)" evidence="1">
    <location>
        <position position="536"/>
    </location>
</feature>
<feature type="splice variant" id="VSP_029000" description="In isoform 3." evidence="4">
    <original>AIPKVRLETIYICGVDEMSTQDIFSYFKEYPPAHIEWLDDTSC</original>
    <variation>GTVCLGEIFHPGSRVTFPAVVSRSFWLCPVCPVVIQIPKRKGF</variation>
    <location>
        <begin position="119"/>
        <end position="161"/>
    </location>
</feature>
<feature type="splice variant" id="VSP_029001" description="In isoform 2." evidence="5">
    <original>AIP</original>
    <variation>VVS</variation>
    <location>
        <begin position="119"/>
        <end position="121"/>
    </location>
</feature>
<feature type="splice variant" id="VSP_029002" description="In isoform 2." evidence="5">
    <location>
        <begin position="122"/>
        <end position="615"/>
    </location>
</feature>
<feature type="splice variant" id="VSP_029003" description="In isoform 3." evidence="4">
    <location>
        <begin position="162"/>
        <end position="615"/>
    </location>
</feature>
<feature type="sequence conflict" description="In Ref. 1; BAB30775." evidence="6" ref="1">
    <original>S</original>
    <variation>I</variation>
    <location>
        <position position="73"/>
    </location>
</feature>
<feature type="sequence conflict" description="In Ref. 3; AAH98495." evidence="6" ref="3">
    <original>K</original>
    <variation>E</variation>
    <location>
        <position position="202"/>
    </location>
</feature>
<feature type="sequence conflict" description="In Ref. 1; BAB27625." evidence="6" ref="1">
    <original>R</original>
    <variation>S</variation>
    <location>
        <position position="247"/>
    </location>
</feature>
<feature type="sequence conflict" description="In Ref. 1; BAB23546." evidence="6" ref="1">
    <original>K</original>
    <variation>Q</variation>
    <location>
        <position position="251"/>
    </location>
</feature>
<feature type="sequence conflict" description="In Ref. 1; BAB23546." evidence="6" ref="1">
    <original>K</original>
    <variation>Q</variation>
    <location>
        <position position="268"/>
    </location>
</feature>
<feature type="sequence conflict" description="In Ref. 1; BAB27625." evidence="6" ref="1">
    <original>S</original>
    <variation>R</variation>
    <location>
        <position position="382"/>
    </location>
</feature>
<feature type="sequence conflict" description="In Ref. 1; BAB27625." evidence="6" ref="1">
    <original>R</original>
    <variation>K</variation>
    <location>
        <position position="508"/>
    </location>
</feature>
<accession>Q8BZR9</accession>
<accession>Q3TNF4</accession>
<accession>Q3TQ96</accession>
<accession>Q4G0C3</accession>
<accession>Q8BMB1</accession>
<accession>Q9CRM6</accession>
<accession>Q9CS93</accession>
<accession>Q9D0G9</accession>
<accession>Q9DBT0</accession>
<comment type="function">
    <text evidence="3">Associates with NCBP1/CBP80 to form an alternative cap-binding complex (CBC) which plays a key role in mRNA export. NCBP3 serves as adapter protein linking the capped RNAs (m7GpppG-capped RNA) to NCBP1/CBP80. Unlike the conventional CBC with NCBP2 which binds both small nuclear RNA (snRNA) and messenger (mRNA) and is involved in their export from the nucleus, the alternative CBC with NCBP3 does not bind snRNA and associates only with mRNA thereby playing a role in only mRNA export. The alternative CBC is particularly important in cellular stress situations such as virus infections and the NCBP3 activity is critical to inhibit virus growth (PubMed:26382858).</text>
</comment>
<comment type="subunit">
    <text evidence="1">Component of an alternative cap-binding complex (CBC) composed of NCBP1/CBP80 and NCBP3. Interacts with SRRT, KPNA3, THOC5 and EIF4A3.</text>
</comment>
<comment type="subcellular location">
    <subcellularLocation>
        <location evidence="1">Nucleus</location>
    </subcellularLocation>
    <subcellularLocation>
        <location evidence="1">Cytoplasm</location>
    </subcellularLocation>
</comment>
<comment type="alternative products">
    <event type="alternative splicing"/>
    <isoform>
        <id>Q8BZR9-1</id>
        <name>1</name>
        <sequence type="displayed"/>
    </isoform>
    <isoform>
        <id>Q8BZR9-2</id>
        <name>2</name>
        <sequence type="described" ref="VSP_029001 VSP_029002"/>
    </isoform>
    <isoform>
        <id>Q8BZR9-3</id>
        <name>3</name>
        <sequence type="described" ref="VSP_029000 VSP_029003"/>
    </isoform>
</comment>
<comment type="similarity">
    <text evidence="6">Belongs to the NCBP3 family.</text>
</comment>
<comment type="sequence caution" evidence="6">
    <conflict type="erroneous initiation">
        <sequence resource="EMBL-CDS" id="BAB27625"/>
    </conflict>
    <text>Extended N-terminus.</text>
</comment>
<comment type="sequence caution" evidence="6">
    <conflict type="erroneous initiation">
        <sequence resource="EMBL-CDS" id="BAC28111"/>
    </conflict>
    <text>Extended N-terminus.</text>
</comment>
<name>NCBP3_MOUSE</name>
<gene>
    <name evidence="1" type="primary">Ncbp3</name>
</gene>
<sequence length="615" mass="70043">MAAVRGLRVSVKAEAPAGPALGLPSPEVESGLERGEPEPMEVEEGELEIVPVRRSLKELLPDTSRRYENKAGSFITGIDVTSKEAIEKKEQRAKRFHFRAEVNLAQRNVALDRDMMKKAIPKVRLETIYICGVDEMSTQDIFSYFKEYPPAHIEWLDDTSCNVVWLDEMTATRALINMSSLPAQDKMRSRDASEDKSSEKNKKDKQEDSSDDDETEEGEVEDENSSDVELDTLSQVEEESLLRNDLRPANKLAKGNRLFMRFATKDDKKELGAARRSQYYMKYGNPNYGGMKGILSNSWKRRYHSRRIQRDVIKKRALIGDDVGLTSYKHRHSGLVNVPEEPIEEEEEEEEEEEDQDMDADDRVVVEYHEELPGLKQPRERSLSRRSSASSSDSDEMDYDLELKMISTPSPKKSMKMTMYADEVESQLKSIRNPMRADSISTSNIKNRIGNKLPPEKFADVRHLLDEKRQHSCPRPAVSSTKPDIRQRLGKRPYSPEKAFSSNQVVRREPSSDVHSRLGVPRQDVKGLYSDTRERKSGGLWTRLGSTPKTKEKNTKKVDHRASGAEEDDSELQRAWGALIKEKEESRQKKSRLDSLPSLQIEVSRESSSGSEAES</sequence>
<dbReference type="EMBL" id="AK004766">
    <property type="protein sequence ID" value="BAB23546.2"/>
    <property type="molecule type" value="mRNA"/>
</dbReference>
<dbReference type="EMBL" id="AK011450">
    <property type="protein sequence ID" value="BAB27625.1"/>
    <property type="status" value="ALT_INIT"/>
    <property type="molecule type" value="mRNA"/>
</dbReference>
<dbReference type="EMBL" id="AK033682">
    <property type="protein sequence ID" value="BAC28428.1"/>
    <property type="molecule type" value="mRNA"/>
</dbReference>
<dbReference type="EMBL" id="AK017496">
    <property type="protein sequence ID" value="BAB30775.2"/>
    <property type="molecule type" value="mRNA"/>
</dbReference>
<dbReference type="EMBL" id="AK020130">
    <property type="protein sequence ID" value="BAB32004.1"/>
    <property type="molecule type" value="mRNA"/>
</dbReference>
<dbReference type="EMBL" id="AK032983">
    <property type="protein sequence ID" value="BAC28111.1"/>
    <property type="status" value="ALT_INIT"/>
    <property type="molecule type" value="mRNA"/>
</dbReference>
<dbReference type="EMBL" id="AK163780">
    <property type="protein sequence ID" value="BAE37488.1"/>
    <property type="molecule type" value="mRNA"/>
</dbReference>
<dbReference type="EMBL" id="AK153152">
    <property type="protein sequence ID" value="BAE31762.1"/>
    <property type="molecule type" value="mRNA"/>
</dbReference>
<dbReference type="EMBL" id="AK153241">
    <property type="protein sequence ID" value="BAE31833.1"/>
    <property type="molecule type" value="mRNA"/>
</dbReference>
<dbReference type="EMBL" id="AK165317">
    <property type="protein sequence ID" value="BAE38135.1"/>
    <property type="molecule type" value="mRNA"/>
</dbReference>
<dbReference type="EMBL" id="AL670399">
    <property type="status" value="NOT_ANNOTATED_CDS"/>
    <property type="molecule type" value="Genomic_DNA"/>
</dbReference>
<dbReference type="EMBL" id="BC098495">
    <property type="protein sequence ID" value="AAH98495.1"/>
    <property type="molecule type" value="mRNA"/>
</dbReference>
<dbReference type="EMBL" id="BC118943">
    <property type="protein sequence ID" value="AAI18944.1"/>
    <property type="molecule type" value="mRNA"/>
</dbReference>
<dbReference type="CCDS" id="CCDS24994.1">
    <molecule id="Q8BZR9-1"/>
</dbReference>
<dbReference type="RefSeq" id="NP_080094.3">
    <molecule id="Q8BZR9-1"/>
    <property type="nucleotide sequence ID" value="NM_025818.3"/>
</dbReference>
<dbReference type="SMR" id="Q8BZR9"/>
<dbReference type="BioGRID" id="211780">
    <property type="interactions" value="7"/>
</dbReference>
<dbReference type="ComplexPortal" id="CPX-3661">
    <property type="entry name" value="Alternative nuclear cap-binding complex"/>
</dbReference>
<dbReference type="FunCoup" id="Q8BZR9">
    <property type="interactions" value="3879"/>
</dbReference>
<dbReference type="STRING" id="10090.ENSMUSP00000021135"/>
<dbReference type="GlyGen" id="Q8BZR9">
    <property type="glycosylation" value="2 sites, 1 O-linked glycan (2 sites)"/>
</dbReference>
<dbReference type="iPTMnet" id="Q8BZR9"/>
<dbReference type="PhosphoSitePlus" id="Q8BZR9"/>
<dbReference type="SwissPalm" id="Q8BZR9"/>
<dbReference type="jPOST" id="Q8BZR9"/>
<dbReference type="PaxDb" id="10090-ENSMUSP00000021135"/>
<dbReference type="PeptideAtlas" id="Q8BZR9"/>
<dbReference type="ProteomicsDB" id="286155">
    <molecule id="Q8BZR9-1"/>
</dbReference>
<dbReference type="ProteomicsDB" id="286156">
    <molecule id="Q8BZR9-2"/>
</dbReference>
<dbReference type="ProteomicsDB" id="286157">
    <molecule id="Q8BZR9-3"/>
</dbReference>
<dbReference type="Pumba" id="Q8BZR9"/>
<dbReference type="Antibodypedia" id="64617">
    <property type="antibodies" value="44 antibodies from 13 providers"/>
</dbReference>
<dbReference type="DNASU" id="66874"/>
<dbReference type="Ensembl" id="ENSMUST00000021135.5">
    <molecule id="Q8BZR9-1"/>
    <property type="protein sequence ID" value="ENSMUSP00000021135.4"/>
    <property type="gene ID" value="ENSMUSG00000020783.15"/>
</dbReference>
<dbReference type="GeneID" id="66874"/>
<dbReference type="KEGG" id="mmu:66874"/>
<dbReference type="UCSC" id="uc007jzu.2">
    <molecule id="Q8BZR9-3"/>
    <property type="organism name" value="mouse"/>
</dbReference>
<dbReference type="UCSC" id="uc007jzv.2">
    <molecule id="Q8BZR9-1"/>
    <property type="organism name" value="mouse"/>
</dbReference>
<dbReference type="AGR" id="MGI:1914124"/>
<dbReference type="CTD" id="55421"/>
<dbReference type="MGI" id="MGI:1914124">
    <property type="gene designation" value="Ncbp3"/>
</dbReference>
<dbReference type="VEuPathDB" id="HostDB:ENSMUSG00000020783"/>
<dbReference type="eggNOG" id="ENOG502QRX4">
    <property type="taxonomic scope" value="Eukaryota"/>
</dbReference>
<dbReference type="GeneTree" id="ENSGT00390000005712"/>
<dbReference type="HOGENOM" id="CLU_488838_0_0_1"/>
<dbReference type="InParanoid" id="Q8BZR9"/>
<dbReference type="OMA" id="QYSRPRP"/>
<dbReference type="OrthoDB" id="422106at2759"/>
<dbReference type="PhylomeDB" id="Q8BZR9"/>
<dbReference type="TreeFam" id="TF331339"/>
<dbReference type="BioGRID-ORCS" id="66874">
    <property type="hits" value="6 hits in 45 CRISPR screens"/>
</dbReference>
<dbReference type="ChiTaRS" id="Ncbp3">
    <property type="organism name" value="mouse"/>
</dbReference>
<dbReference type="PRO" id="PR:Q8BZR9"/>
<dbReference type="Proteomes" id="UP000000589">
    <property type="component" value="Chromosome 11"/>
</dbReference>
<dbReference type="RNAct" id="Q8BZR9">
    <property type="molecule type" value="protein"/>
</dbReference>
<dbReference type="Bgee" id="ENSMUSG00000020783">
    <property type="expression patterns" value="Expressed in rostral migratory stream and 246 other cell types or tissues"/>
</dbReference>
<dbReference type="GO" id="GO:0005737">
    <property type="term" value="C:cytoplasm"/>
    <property type="evidence" value="ECO:0000250"/>
    <property type="project" value="UniProtKB"/>
</dbReference>
<dbReference type="GO" id="GO:0005846">
    <property type="term" value="C:nuclear cap binding complex"/>
    <property type="evidence" value="ECO:0000266"/>
    <property type="project" value="ComplexPortal"/>
</dbReference>
<dbReference type="GO" id="GO:0016607">
    <property type="term" value="C:nuclear speck"/>
    <property type="evidence" value="ECO:0007669"/>
    <property type="project" value="Ensembl"/>
</dbReference>
<dbReference type="GO" id="GO:0005634">
    <property type="term" value="C:nucleus"/>
    <property type="evidence" value="ECO:0000250"/>
    <property type="project" value="UniProtKB"/>
</dbReference>
<dbReference type="GO" id="GO:0003729">
    <property type="term" value="F:mRNA binding"/>
    <property type="evidence" value="ECO:0000250"/>
    <property type="project" value="UniProtKB"/>
</dbReference>
<dbReference type="GO" id="GO:0000340">
    <property type="term" value="F:RNA 7-methylguanosine cap binding"/>
    <property type="evidence" value="ECO:0000250"/>
    <property type="project" value="UniProtKB"/>
</dbReference>
<dbReference type="GO" id="GO:0000339">
    <property type="term" value="F:RNA cap binding"/>
    <property type="evidence" value="ECO:0000314"/>
    <property type="project" value="UniProtKB"/>
</dbReference>
<dbReference type="GO" id="GO:0006370">
    <property type="term" value="P:7-methylguanosine mRNA capping"/>
    <property type="evidence" value="ECO:0007669"/>
    <property type="project" value="UniProtKB-KW"/>
</dbReference>
<dbReference type="GO" id="GO:0051607">
    <property type="term" value="P:defense response to virus"/>
    <property type="evidence" value="ECO:0000266"/>
    <property type="project" value="ComplexPortal"/>
</dbReference>
<dbReference type="GO" id="GO:0006406">
    <property type="term" value="P:mRNA export from nucleus"/>
    <property type="evidence" value="ECO:0000266"/>
    <property type="project" value="ComplexPortal"/>
</dbReference>
<dbReference type="GO" id="GO:0042789">
    <property type="term" value="P:mRNA transcription by RNA polymerase II"/>
    <property type="evidence" value="ECO:0000303"/>
    <property type="project" value="ComplexPortal"/>
</dbReference>
<dbReference type="GO" id="GO:0035194">
    <property type="term" value="P:regulatory ncRNA-mediated post-transcriptional gene silencing"/>
    <property type="evidence" value="ECO:0000303"/>
    <property type="project" value="ComplexPortal"/>
</dbReference>
<dbReference type="GO" id="GO:0006408">
    <property type="term" value="P:snRNA export from nucleus"/>
    <property type="evidence" value="ECO:0000266"/>
    <property type="project" value="ComplexPortal"/>
</dbReference>
<dbReference type="FunFam" id="3.30.70.330:FF:000337">
    <property type="entry name" value="nuclear cap-binding protein subunit 3 isoform X1"/>
    <property type="match status" value="1"/>
</dbReference>
<dbReference type="Gene3D" id="3.30.70.330">
    <property type="match status" value="1"/>
</dbReference>
<dbReference type="InterPro" id="IPR019416">
    <property type="entry name" value="NCBP3"/>
</dbReference>
<dbReference type="InterPro" id="IPR012677">
    <property type="entry name" value="Nucleotide-bd_a/b_plait_sf"/>
</dbReference>
<dbReference type="PANTHER" id="PTHR16291">
    <property type="entry name" value="NUCLEAR CAP-BINDING PROTEIN SUBUNIT 3"/>
    <property type="match status" value="1"/>
</dbReference>
<dbReference type="PANTHER" id="PTHR16291:SF0">
    <property type="entry name" value="NUCLEAR CAP-BINDING PROTEIN SUBUNIT 3"/>
    <property type="match status" value="1"/>
</dbReference>
<dbReference type="Pfam" id="PF10309">
    <property type="entry name" value="NCBP3"/>
    <property type="match status" value="1"/>
</dbReference>
<organism>
    <name type="scientific">Mus musculus</name>
    <name type="common">Mouse</name>
    <dbReference type="NCBI Taxonomy" id="10090"/>
    <lineage>
        <taxon>Eukaryota</taxon>
        <taxon>Metazoa</taxon>
        <taxon>Chordata</taxon>
        <taxon>Craniata</taxon>
        <taxon>Vertebrata</taxon>
        <taxon>Euteleostomi</taxon>
        <taxon>Mammalia</taxon>
        <taxon>Eutheria</taxon>
        <taxon>Euarchontoglires</taxon>
        <taxon>Glires</taxon>
        <taxon>Rodentia</taxon>
        <taxon>Myomorpha</taxon>
        <taxon>Muroidea</taxon>
        <taxon>Muridae</taxon>
        <taxon>Murinae</taxon>
        <taxon>Mus</taxon>
        <taxon>Mus</taxon>
    </lineage>
</organism>
<reference key="1">
    <citation type="journal article" date="2005" name="Science">
        <title>The transcriptional landscape of the mammalian genome.</title>
        <authorList>
            <person name="Carninci P."/>
            <person name="Kasukawa T."/>
            <person name="Katayama S."/>
            <person name="Gough J."/>
            <person name="Frith M.C."/>
            <person name="Maeda N."/>
            <person name="Oyama R."/>
            <person name="Ravasi T."/>
            <person name="Lenhard B."/>
            <person name="Wells C."/>
            <person name="Kodzius R."/>
            <person name="Shimokawa K."/>
            <person name="Bajic V.B."/>
            <person name="Brenner S.E."/>
            <person name="Batalov S."/>
            <person name="Forrest A.R."/>
            <person name="Zavolan M."/>
            <person name="Davis M.J."/>
            <person name="Wilming L.G."/>
            <person name="Aidinis V."/>
            <person name="Allen J.E."/>
            <person name="Ambesi-Impiombato A."/>
            <person name="Apweiler R."/>
            <person name="Aturaliya R.N."/>
            <person name="Bailey T.L."/>
            <person name="Bansal M."/>
            <person name="Baxter L."/>
            <person name="Beisel K.W."/>
            <person name="Bersano T."/>
            <person name="Bono H."/>
            <person name="Chalk A.M."/>
            <person name="Chiu K.P."/>
            <person name="Choudhary V."/>
            <person name="Christoffels A."/>
            <person name="Clutterbuck D.R."/>
            <person name="Crowe M.L."/>
            <person name="Dalla E."/>
            <person name="Dalrymple B.P."/>
            <person name="de Bono B."/>
            <person name="Della Gatta G."/>
            <person name="di Bernardo D."/>
            <person name="Down T."/>
            <person name="Engstrom P."/>
            <person name="Fagiolini M."/>
            <person name="Faulkner G."/>
            <person name="Fletcher C.F."/>
            <person name="Fukushima T."/>
            <person name="Furuno M."/>
            <person name="Futaki S."/>
            <person name="Gariboldi M."/>
            <person name="Georgii-Hemming P."/>
            <person name="Gingeras T.R."/>
            <person name="Gojobori T."/>
            <person name="Green R.E."/>
            <person name="Gustincich S."/>
            <person name="Harbers M."/>
            <person name="Hayashi Y."/>
            <person name="Hensch T.K."/>
            <person name="Hirokawa N."/>
            <person name="Hill D."/>
            <person name="Huminiecki L."/>
            <person name="Iacono M."/>
            <person name="Ikeo K."/>
            <person name="Iwama A."/>
            <person name="Ishikawa T."/>
            <person name="Jakt M."/>
            <person name="Kanapin A."/>
            <person name="Katoh M."/>
            <person name="Kawasawa Y."/>
            <person name="Kelso J."/>
            <person name="Kitamura H."/>
            <person name="Kitano H."/>
            <person name="Kollias G."/>
            <person name="Krishnan S.P."/>
            <person name="Kruger A."/>
            <person name="Kummerfeld S.K."/>
            <person name="Kurochkin I.V."/>
            <person name="Lareau L.F."/>
            <person name="Lazarevic D."/>
            <person name="Lipovich L."/>
            <person name="Liu J."/>
            <person name="Liuni S."/>
            <person name="McWilliam S."/>
            <person name="Madan Babu M."/>
            <person name="Madera M."/>
            <person name="Marchionni L."/>
            <person name="Matsuda H."/>
            <person name="Matsuzawa S."/>
            <person name="Miki H."/>
            <person name="Mignone F."/>
            <person name="Miyake S."/>
            <person name="Morris K."/>
            <person name="Mottagui-Tabar S."/>
            <person name="Mulder N."/>
            <person name="Nakano N."/>
            <person name="Nakauchi H."/>
            <person name="Ng P."/>
            <person name="Nilsson R."/>
            <person name="Nishiguchi S."/>
            <person name="Nishikawa S."/>
            <person name="Nori F."/>
            <person name="Ohara O."/>
            <person name="Okazaki Y."/>
            <person name="Orlando V."/>
            <person name="Pang K.C."/>
            <person name="Pavan W.J."/>
            <person name="Pavesi G."/>
            <person name="Pesole G."/>
            <person name="Petrovsky N."/>
            <person name="Piazza S."/>
            <person name="Reed J."/>
            <person name="Reid J.F."/>
            <person name="Ring B.Z."/>
            <person name="Ringwald M."/>
            <person name="Rost B."/>
            <person name="Ruan Y."/>
            <person name="Salzberg S.L."/>
            <person name="Sandelin A."/>
            <person name="Schneider C."/>
            <person name="Schoenbach C."/>
            <person name="Sekiguchi K."/>
            <person name="Semple C.A."/>
            <person name="Seno S."/>
            <person name="Sessa L."/>
            <person name="Sheng Y."/>
            <person name="Shibata Y."/>
            <person name="Shimada H."/>
            <person name="Shimada K."/>
            <person name="Silva D."/>
            <person name="Sinclair B."/>
            <person name="Sperling S."/>
            <person name="Stupka E."/>
            <person name="Sugiura K."/>
            <person name="Sultana R."/>
            <person name="Takenaka Y."/>
            <person name="Taki K."/>
            <person name="Tammoja K."/>
            <person name="Tan S.L."/>
            <person name="Tang S."/>
            <person name="Taylor M.S."/>
            <person name="Tegner J."/>
            <person name="Teichmann S.A."/>
            <person name="Ueda H.R."/>
            <person name="van Nimwegen E."/>
            <person name="Verardo R."/>
            <person name="Wei C.L."/>
            <person name="Yagi K."/>
            <person name="Yamanishi H."/>
            <person name="Zabarovsky E."/>
            <person name="Zhu S."/>
            <person name="Zimmer A."/>
            <person name="Hide W."/>
            <person name="Bult C."/>
            <person name="Grimmond S.M."/>
            <person name="Teasdale R.D."/>
            <person name="Liu E.T."/>
            <person name="Brusic V."/>
            <person name="Quackenbush J."/>
            <person name="Wahlestedt C."/>
            <person name="Mattick J.S."/>
            <person name="Hume D.A."/>
            <person name="Kai C."/>
            <person name="Sasaki D."/>
            <person name="Tomaru Y."/>
            <person name="Fukuda S."/>
            <person name="Kanamori-Katayama M."/>
            <person name="Suzuki M."/>
            <person name="Aoki J."/>
            <person name="Arakawa T."/>
            <person name="Iida J."/>
            <person name="Imamura K."/>
            <person name="Itoh M."/>
            <person name="Kato T."/>
            <person name="Kawaji H."/>
            <person name="Kawagashira N."/>
            <person name="Kawashima T."/>
            <person name="Kojima M."/>
            <person name="Kondo S."/>
            <person name="Konno H."/>
            <person name="Nakano K."/>
            <person name="Ninomiya N."/>
            <person name="Nishio T."/>
            <person name="Okada M."/>
            <person name="Plessy C."/>
            <person name="Shibata K."/>
            <person name="Shiraki T."/>
            <person name="Suzuki S."/>
            <person name="Tagami M."/>
            <person name="Waki K."/>
            <person name="Watahiki A."/>
            <person name="Okamura-Oho Y."/>
            <person name="Suzuki H."/>
            <person name="Kawai J."/>
            <person name="Hayashizaki Y."/>
        </authorList>
    </citation>
    <scope>NUCLEOTIDE SEQUENCE [LARGE SCALE MRNA] (ISOFORMS 1 AND 2)</scope>
    <source>
        <strain>C57BL/6J</strain>
        <tissue>Bone marrow</tissue>
        <tissue>Cecum</tissue>
        <tissue>Head</tissue>
        <tissue>Lung</tissue>
        <tissue>Spleen</tissue>
        <tissue>Wolffian duct</tissue>
    </source>
</reference>
<reference key="2">
    <citation type="journal article" date="2009" name="PLoS Biol.">
        <title>Lineage-specific biology revealed by a finished genome assembly of the mouse.</title>
        <authorList>
            <person name="Church D.M."/>
            <person name="Goodstadt L."/>
            <person name="Hillier L.W."/>
            <person name="Zody M.C."/>
            <person name="Goldstein S."/>
            <person name="She X."/>
            <person name="Bult C.J."/>
            <person name="Agarwala R."/>
            <person name="Cherry J.L."/>
            <person name="DiCuccio M."/>
            <person name="Hlavina W."/>
            <person name="Kapustin Y."/>
            <person name="Meric P."/>
            <person name="Maglott D."/>
            <person name="Birtle Z."/>
            <person name="Marques A.C."/>
            <person name="Graves T."/>
            <person name="Zhou S."/>
            <person name="Teague B."/>
            <person name="Potamousis K."/>
            <person name="Churas C."/>
            <person name="Place M."/>
            <person name="Herschleb J."/>
            <person name="Runnheim R."/>
            <person name="Forrest D."/>
            <person name="Amos-Landgraf J."/>
            <person name="Schwartz D.C."/>
            <person name="Cheng Z."/>
            <person name="Lindblad-Toh K."/>
            <person name="Eichler E.E."/>
            <person name="Ponting C.P."/>
        </authorList>
    </citation>
    <scope>NUCLEOTIDE SEQUENCE [LARGE SCALE GENOMIC DNA]</scope>
    <source>
        <strain>C57BL/6J</strain>
    </source>
</reference>
<reference key="3">
    <citation type="journal article" date="2004" name="Genome Res.">
        <title>The status, quality, and expansion of the NIH full-length cDNA project: the Mammalian Gene Collection (MGC).</title>
        <authorList>
            <consortium name="The MGC Project Team"/>
        </authorList>
    </citation>
    <scope>NUCLEOTIDE SEQUENCE [LARGE SCALE MRNA] (ISOFORMS 1 AND 3)</scope>
    <source>
        <tissue>Trophoblast stem cell</tissue>
    </source>
</reference>
<reference key="4">
    <citation type="journal article" date="2010" name="Cell">
        <title>A tissue-specific atlas of mouse protein phosphorylation and expression.</title>
        <authorList>
            <person name="Huttlin E.L."/>
            <person name="Jedrychowski M.P."/>
            <person name="Elias J.E."/>
            <person name="Goswami T."/>
            <person name="Rad R."/>
            <person name="Beausoleil S.A."/>
            <person name="Villen J."/>
            <person name="Haas W."/>
            <person name="Sowa M.E."/>
            <person name="Gygi S.P."/>
        </authorList>
    </citation>
    <scope>PHOSPHORYLATION [LARGE SCALE ANALYSIS] AT SER-25 AND SER-563</scope>
    <scope>IDENTIFICATION BY MASS SPECTROMETRY [LARGE SCALE ANALYSIS]</scope>
    <source>
        <tissue>Kidney</tissue>
        <tissue>Lung</tissue>
        <tissue>Spleen</tissue>
        <tissue>Testis</tissue>
    </source>
</reference>
<reference key="5">
    <citation type="journal article" date="2015" name="Nat. Commun.">
        <title>mRNA export through an additional cap-binding complex consisting of NCBP1 and NCBP3.</title>
        <authorList>
            <person name="Gebhardt A."/>
            <person name="Habjan M."/>
            <person name="Benda C."/>
            <person name="Meiler A."/>
            <person name="Haas D.A."/>
            <person name="Hein M.Y."/>
            <person name="Mann A."/>
            <person name="Mann M."/>
            <person name="Habermann B."/>
            <person name="Pichlmair A."/>
        </authorList>
    </citation>
    <scope>FUNCTION</scope>
    <scope>IDENTIFICATION BY MASS SPECTROMETRY</scope>
</reference>
<proteinExistence type="evidence at protein level"/>
<evidence type="ECO:0000250" key="1">
    <source>
        <dbReference type="UniProtKB" id="Q53F19"/>
    </source>
</evidence>
<evidence type="ECO:0000256" key="2">
    <source>
        <dbReference type="SAM" id="MobiDB-lite"/>
    </source>
</evidence>
<evidence type="ECO:0000269" key="3">
    <source>
    </source>
</evidence>
<evidence type="ECO:0000303" key="4">
    <source>
    </source>
</evidence>
<evidence type="ECO:0000303" key="5">
    <source>
    </source>
</evidence>
<evidence type="ECO:0000305" key="6"/>
<evidence type="ECO:0007744" key="7">
    <source>
    </source>
</evidence>
<protein>
    <recommendedName>
        <fullName evidence="1">Nuclear cap-binding protein subunit 3</fullName>
    </recommendedName>
</protein>